<name>MNME_NITEC</name>
<protein>
    <recommendedName>
        <fullName evidence="1">tRNA modification GTPase MnmE</fullName>
        <ecNumber evidence="1">3.6.-.-</ecNumber>
    </recommendedName>
</protein>
<reference key="1">
    <citation type="journal article" date="2007" name="Environ. Microbiol.">
        <title>Whole-genome analysis of the ammonia-oxidizing bacterium, Nitrosomonas eutropha C91: implications for niche adaptation.</title>
        <authorList>
            <person name="Stein L.Y."/>
            <person name="Arp D.J."/>
            <person name="Berube P.M."/>
            <person name="Chain P.S."/>
            <person name="Hauser L."/>
            <person name="Jetten M.S."/>
            <person name="Klotz M.G."/>
            <person name="Larimer F.W."/>
            <person name="Norton J.M."/>
            <person name="Op den Camp H.J.M."/>
            <person name="Shin M."/>
            <person name="Wei X."/>
        </authorList>
    </citation>
    <scope>NUCLEOTIDE SEQUENCE [LARGE SCALE GENOMIC DNA]</scope>
    <source>
        <strain>DSM 101675 / C91 / Nm57</strain>
    </source>
</reference>
<gene>
    <name evidence="1" type="primary">mnmE</name>
    <name evidence="1" type="synonym">trmE</name>
    <name type="ordered locus">Neut_2155</name>
</gene>
<proteinExistence type="inferred from homology"/>
<dbReference type="EC" id="3.6.-.-" evidence="1"/>
<dbReference type="EMBL" id="CP000450">
    <property type="protein sequence ID" value="ABI60377.1"/>
    <property type="status" value="ALT_INIT"/>
    <property type="molecule type" value="Genomic_DNA"/>
</dbReference>
<dbReference type="RefSeq" id="WP_041353850.1">
    <property type="nucleotide sequence ID" value="NC_008344.1"/>
</dbReference>
<dbReference type="SMR" id="Q0AE55"/>
<dbReference type="STRING" id="335283.Neut_2155"/>
<dbReference type="KEGG" id="net:Neut_2155"/>
<dbReference type="eggNOG" id="COG0486">
    <property type="taxonomic scope" value="Bacteria"/>
</dbReference>
<dbReference type="HOGENOM" id="CLU_019624_4_1_4"/>
<dbReference type="OrthoDB" id="9805918at2"/>
<dbReference type="Proteomes" id="UP000001966">
    <property type="component" value="Chromosome"/>
</dbReference>
<dbReference type="GO" id="GO:0005829">
    <property type="term" value="C:cytosol"/>
    <property type="evidence" value="ECO:0007669"/>
    <property type="project" value="TreeGrafter"/>
</dbReference>
<dbReference type="GO" id="GO:0005525">
    <property type="term" value="F:GTP binding"/>
    <property type="evidence" value="ECO:0007669"/>
    <property type="project" value="UniProtKB-UniRule"/>
</dbReference>
<dbReference type="GO" id="GO:0003924">
    <property type="term" value="F:GTPase activity"/>
    <property type="evidence" value="ECO:0007669"/>
    <property type="project" value="UniProtKB-UniRule"/>
</dbReference>
<dbReference type="GO" id="GO:0046872">
    <property type="term" value="F:metal ion binding"/>
    <property type="evidence" value="ECO:0007669"/>
    <property type="project" value="UniProtKB-KW"/>
</dbReference>
<dbReference type="GO" id="GO:0030488">
    <property type="term" value="P:tRNA methylation"/>
    <property type="evidence" value="ECO:0007669"/>
    <property type="project" value="TreeGrafter"/>
</dbReference>
<dbReference type="GO" id="GO:0002098">
    <property type="term" value="P:tRNA wobble uridine modification"/>
    <property type="evidence" value="ECO:0007669"/>
    <property type="project" value="TreeGrafter"/>
</dbReference>
<dbReference type="CDD" id="cd04164">
    <property type="entry name" value="trmE"/>
    <property type="match status" value="1"/>
</dbReference>
<dbReference type="CDD" id="cd14858">
    <property type="entry name" value="TrmE_N"/>
    <property type="match status" value="1"/>
</dbReference>
<dbReference type="FunFam" id="3.30.1360.120:FF:000001">
    <property type="entry name" value="tRNA modification GTPase MnmE"/>
    <property type="match status" value="1"/>
</dbReference>
<dbReference type="FunFam" id="3.40.50.300:FF:001376">
    <property type="entry name" value="tRNA modification GTPase MnmE"/>
    <property type="match status" value="1"/>
</dbReference>
<dbReference type="Gene3D" id="3.40.50.300">
    <property type="entry name" value="P-loop containing nucleotide triphosphate hydrolases"/>
    <property type="match status" value="1"/>
</dbReference>
<dbReference type="Gene3D" id="3.30.1360.120">
    <property type="entry name" value="Probable tRNA modification gtpase trme, domain 1"/>
    <property type="match status" value="1"/>
</dbReference>
<dbReference type="Gene3D" id="1.20.120.430">
    <property type="entry name" value="tRNA modification GTPase MnmE domain 2"/>
    <property type="match status" value="1"/>
</dbReference>
<dbReference type="HAMAP" id="MF_00379">
    <property type="entry name" value="GTPase_MnmE"/>
    <property type="match status" value="1"/>
</dbReference>
<dbReference type="InterPro" id="IPR031168">
    <property type="entry name" value="G_TrmE"/>
</dbReference>
<dbReference type="InterPro" id="IPR006073">
    <property type="entry name" value="GTP-bd"/>
</dbReference>
<dbReference type="InterPro" id="IPR018948">
    <property type="entry name" value="GTP-bd_TrmE_N"/>
</dbReference>
<dbReference type="InterPro" id="IPR004520">
    <property type="entry name" value="GTPase_MnmE"/>
</dbReference>
<dbReference type="InterPro" id="IPR027368">
    <property type="entry name" value="MnmE_dom2"/>
</dbReference>
<dbReference type="InterPro" id="IPR025867">
    <property type="entry name" value="MnmE_helical"/>
</dbReference>
<dbReference type="InterPro" id="IPR027417">
    <property type="entry name" value="P-loop_NTPase"/>
</dbReference>
<dbReference type="InterPro" id="IPR005225">
    <property type="entry name" value="Small_GTP-bd"/>
</dbReference>
<dbReference type="InterPro" id="IPR027266">
    <property type="entry name" value="TrmE/GcvT_dom1"/>
</dbReference>
<dbReference type="NCBIfam" id="TIGR00450">
    <property type="entry name" value="mnmE_trmE_thdF"/>
    <property type="match status" value="1"/>
</dbReference>
<dbReference type="NCBIfam" id="NF003661">
    <property type="entry name" value="PRK05291.1-3"/>
    <property type="match status" value="1"/>
</dbReference>
<dbReference type="NCBIfam" id="TIGR00231">
    <property type="entry name" value="small_GTP"/>
    <property type="match status" value="1"/>
</dbReference>
<dbReference type="PANTHER" id="PTHR42714">
    <property type="entry name" value="TRNA MODIFICATION GTPASE GTPBP3"/>
    <property type="match status" value="1"/>
</dbReference>
<dbReference type="PANTHER" id="PTHR42714:SF2">
    <property type="entry name" value="TRNA MODIFICATION GTPASE GTPBP3, MITOCHONDRIAL"/>
    <property type="match status" value="1"/>
</dbReference>
<dbReference type="Pfam" id="PF01926">
    <property type="entry name" value="MMR_HSR1"/>
    <property type="match status" value="1"/>
</dbReference>
<dbReference type="Pfam" id="PF12631">
    <property type="entry name" value="MnmE_helical"/>
    <property type="match status" value="1"/>
</dbReference>
<dbReference type="Pfam" id="PF10396">
    <property type="entry name" value="TrmE_N"/>
    <property type="match status" value="1"/>
</dbReference>
<dbReference type="PRINTS" id="PR00449">
    <property type="entry name" value="RASTRNSFRMNG"/>
</dbReference>
<dbReference type="SUPFAM" id="SSF52540">
    <property type="entry name" value="P-loop containing nucleoside triphosphate hydrolases"/>
    <property type="match status" value="1"/>
</dbReference>
<dbReference type="SUPFAM" id="SSF116878">
    <property type="entry name" value="TrmE connector domain"/>
    <property type="match status" value="1"/>
</dbReference>
<dbReference type="PROSITE" id="PS51709">
    <property type="entry name" value="G_TRME"/>
    <property type="match status" value="1"/>
</dbReference>
<organism>
    <name type="scientific">Nitrosomonas eutropha (strain DSM 101675 / C91 / Nm57)</name>
    <dbReference type="NCBI Taxonomy" id="335283"/>
    <lineage>
        <taxon>Bacteria</taxon>
        <taxon>Pseudomonadati</taxon>
        <taxon>Pseudomonadota</taxon>
        <taxon>Betaproteobacteria</taxon>
        <taxon>Nitrosomonadales</taxon>
        <taxon>Nitrosomonadaceae</taxon>
        <taxon>Nitrosomonas</taxon>
    </lineage>
</organism>
<evidence type="ECO:0000255" key="1">
    <source>
        <dbReference type="HAMAP-Rule" id="MF_00379"/>
    </source>
</evidence>
<evidence type="ECO:0000305" key="2"/>
<accession>Q0AE55</accession>
<sequence length="451" mass="48927">MKNNDTIAAIATPPGRGGIGIVRISGTNLEQLAQTILGKLPDPRHAGLFNFLDQNNQVIDQGIVLYFPSPNSYTGEDVLELHGHGGPAVMNLLLTRCLQLGARLAEPGEFTLRAFLNEKLDLAQAEGVADLIEASTANAARCAVRSLHGEFSSAIHQLVSALIDLRVLVEATLDFPEEEIDFLQSAHAVEQLASIQTKLEQVLSASRRGNLLQEGIKVVLTGQPNVGKSSLLNRLAGDEIAIVTEIPGTTRDTIRQSIEIEGIPLHLIDTAGLRETSDIVEQHGIARAYAAIEQADLVLLLVDGRYGVTKEDHSVLARLPKELPVLTVHNKIDLSGQLSRIEEDTSGTAIYLSVKSGEGIELLRTVLLKTVGWQTNIAGEGAYMARQRHLQALLHAKELLKRAETWLHTADQLEILAEELRLAQQALSSITGEFTSDDLLGEIFSNFCIGK</sequence>
<keyword id="KW-0963">Cytoplasm</keyword>
<keyword id="KW-0342">GTP-binding</keyword>
<keyword id="KW-0378">Hydrolase</keyword>
<keyword id="KW-0460">Magnesium</keyword>
<keyword id="KW-0479">Metal-binding</keyword>
<keyword id="KW-0547">Nucleotide-binding</keyword>
<keyword id="KW-0630">Potassium</keyword>
<keyword id="KW-0819">tRNA processing</keyword>
<feature type="chain" id="PRO_0000345855" description="tRNA modification GTPase MnmE">
    <location>
        <begin position="1"/>
        <end position="451"/>
    </location>
</feature>
<feature type="domain" description="TrmE-type G">
    <location>
        <begin position="215"/>
        <end position="372"/>
    </location>
</feature>
<feature type="binding site" evidence="1">
    <location>
        <position position="23"/>
    </location>
    <ligand>
        <name>(6S)-5-formyl-5,6,7,8-tetrahydrofolate</name>
        <dbReference type="ChEBI" id="CHEBI:57457"/>
    </ligand>
</feature>
<feature type="binding site" evidence="1">
    <location>
        <position position="80"/>
    </location>
    <ligand>
        <name>(6S)-5-formyl-5,6,7,8-tetrahydrofolate</name>
        <dbReference type="ChEBI" id="CHEBI:57457"/>
    </ligand>
</feature>
<feature type="binding site" evidence="1">
    <location>
        <position position="119"/>
    </location>
    <ligand>
        <name>(6S)-5-formyl-5,6,7,8-tetrahydrofolate</name>
        <dbReference type="ChEBI" id="CHEBI:57457"/>
    </ligand>
</feature>
<feature type="binding site" evidence="1">
    <location>
        <begin position="225"/>
        <end position="230"/>
    </location>
    <ligand>
        <name>GTP</name>
        <dbReference type="ChEBI" id="CHEBI:37565"/>
    </ligand>
</feature>
<feature type="binding site" evidence="1">
    <location>
        <position position="225"/>
    </location>
    <ligand>
        <name>K(+)</name>
        <dbReference type="ChEBI" id="CHEBI:29103"/>
    </ligand>
</feature>
<feature type="binding site" evidence="1">
    <location>
        <position position="229"/>
    </location>
    <ligand>
        <name>Mg(2+)</name>
        <dbReference type="ChEBI" id="CHEBI:18420"/>
    </ligand>
</feature>
<feature type="binding site" evidence="1">
    <location>
        <begin position="244"/>
        <end position="250"/>
    </location>
    <ligand>
        <name>GTP</name>
        <dbReference type="ChEBI" id="CHEBI:37565"/>
    </ligand>
</feature>
<feature type="binding site" evidence="1">
    <location>
        <position position="244"/>
    </location>
    <ligand>
        <name>K(+)</name>
        <dbReference type="ChEBI" id="CHEBI:29103"/>
    </ligand>
</feature>
<feature type="binding site" evidence="1">
    <location>
        <position position="246"/>
    </location>
    <ligand>
        <name>K(+)</name>
        <dbReference type="ChEBI" id="CHEBI:29103"/>
    </ligand>
</feature>
<feature type="binding site" evidence="1">
    <location>
        <position position="249"/>
    </location>
    <ligand>
        <name>K(+)</name>
        <dbReference type="ChEBI" id="CHEBI:29103"/>
    </ligand>
</feature>
<feature type="binding site" evidence="1">
    <location>
        <position position="250"/>
    </location>
    <ligand>
        <name>Mg(2+)</name>
        <dbReference type="ChEBI" id="CHEBI:18420"/>
    </ligand>
</feature>
<feature type="binding site" evidence="1">
    <location>
        <begin position="269"/>
        <end position="272"/>
    </location>
    <ligand>
        <name>GTP</name>
        <dbReference type="ChEBI" id="CHEBI:37565"/>
    </ligand>
</feature>
<feature type="binding site" evidence="1">
    <location>
        <position position="451"/>
    </location>
    <ligand>
        <name>(6S)-5-formyl-5,6,7,8-tetrahydrofolate</name>
        <dbReference type="ChEBI" id="CHEBI:57457"/>
    </ligand>
</feature>
<comment type="function">
    <text evidence="1">Exhibits a very high intrinsic GTPase hydrolysis rate. Involved in the addition of a carboxymethylaminomethyl (cmnm) group at the wobble position (U34) of certain tRNAs, forming tRNA-cmnm(5)s(2)U34.</text>
</comment>
<comment type="cofactor">
    <cofactor evidence="1">
        <name>K(+)</name>
        <dbReference type="ChEBI" id="CHEBI:29103"/>
    </cofactor>
    <text evidence="1">Binds 1 potassium ion per subunit.</text>
</comment>
<comment type="subunit">
    <text evidence="1">Homodimer. Heterotetramer of two MnmE and two MnmG subunits.</text>
</comment>
<comment type="subcellular location">
    <subcellularLocation>
        <location evidence="1">Cytoplasm</location>
    </subcellularLocation>
</comment>
<comment type="similarity">
    <text evidence="1">Belongs to the TRAFAC class TrmE-Era-EngA-EngB-Septin-like GTPase superfamily. TrmE GTPase family.</text>
</comment>
<comment type="sequence caution" evidence="2">
    <conflict type="erroneous initiation">
        <sequence resource="EMBL-CDS" id="ABI60377"/>
    </conflict>
</comment>